<comment type="function">
    <text evidence="2">Cytokine produced by activated CD4-positive helper T-cells and to a lesser extend activated CD8-positive T-cells and natural killer (NK) cells that plays pivotal roles in the immune response and tolerance. Binds to a receptor complex composed of either the high-affinity trimeric IL-2R (IL2RA/CD25, IL2RB/CD122 and IL2RG/CD132) or the low-affinity dimeric IL-2R (IL2RB and IL2RG). Interaction with the receptor leads to oligomerization and conformation changes in the IL-2R subunits resulting in downstream signaling starting with phosphorylation of JAK1 and JAK3. In turn, JAK1 and JAK3 phosphorylate the receptor to form a docking site leading to the phosphorylation of several substrates including STAT5. This process leads to activation of several pathways including STAT, phosphoinositide-3-kinase/PI3K and mitogen-activated protein kinase/MAPK pathways. Functions as a T-cell growth factor and can increase NK-cell cytolytic activity as well. Promotes strong proliferation of activated B-cells and subsequently immunoglobulin production. Plays a pivotal role in regulating the adaptive immune system by controlling the survival and proliferation of regulatory T-cells, which are required for the maintenance of immune tolerance. Moreover, participates in the differentiation and homeostasis of effector T-cell subsets, including Th1, Th2, Th17 as well as memory CD8-positive T-cells.</text>
</comment>
<comment type="subcellular location">
    <subcellularLocation>
        <location>Secreted</location>
    </subcellularLocation>
</comment>
<comment type="similarity">
    <text evidence="4">Belongs to the IL-2 family.</text>
</comment>
<accession>Q29416</accession>
<accession>Q28249</accession>
<keyword id="KW-1064">Adaptive immunity</keyword>
<keyword id="KW-0202">Cytokine</keyword>
<keyword id="KW-1015">Disulfide bond</keyword>
<keyword id="KW-0325">Glycoprotein</keyword>
<keyword id="KW-0339">Growth factor</keyword>
<keyword id="KW-0391">Immunity</keyword>
<keyword id="KW-1185">Reference proteome</keyword>
<keyword id="KW-0964">Secreted</keyword>
<keyword id="KW-0732">Signal</keyword>
<gene>
    <name type="primary">IL2</name>
</gene>
<reference key="1">
    <citation type="journal article" date="1995" name="DNA Seq.">
        <title>The isolation and sequence of canine interleukin-2.</title>
        <authorList>
            <person name="Dunham S.P."/>
            <person name="Argyle D.J."/>
            <person name="Onions D.E."/>
        </authorList>
    </citation>
    <scope>NUCLEOTIDE SEQUENCE [MRNA]</scope>
    <source>
        <strain>XBRED21/12/93</strain>
        <tissue>Lymph node</tissue>
    </source>
</reference>
<reference key="2">
    <citation type="journal article" date="1995" name="Gene">
        <title>Cloning of the canine interleukin-2-encoding cDNA.</title>
        <authorList>
            <person name="Knapp D.W."/>
            <person name="Williams J.S."/>
            <person name="Andrisani O.M."/>
        </authorList>
    </citation>
    <scope>NUCLEOTIDE SEQUENCE [MRNA]</scope>
    <source>
        <strain>Beagle</strain>
        <tissue>Spleen</tissue>
    </source>
</reference>
<reference key="3">
    <citation type="journal article" date="1995" name="Vet. Immunol. Immunopathol.">
        <title>A single nucleotide insertion in the canine interleukin-2 receptor gamma chain results in X-linked severe combined immunodeficiency disease.</title>
        <authorList>
            <person name="Somberg R.L."/>
            <person name="Pullen R.P."/>
            <person name="Casal M.L."/>
            <person name="Patterson D.F."/>
            <person name="Felsburg P.J."/>
            <person name="Henthorn P.S."/>
        </authorList>
    </citation>
    <scope>NUCLEOTIDE SEQUENCE [MRNA]</scope>
</reference>
<name>IL2_CANLF</name>
<feature type="signal peptide" evidence="1">
    <location>
        <begin position="1"/>
        <end position="20"/>
    </location>
</feature>
<feature type="chain" id="PRO_0000015476" description="Interleukin-2">
    <location>
        <begin position="21"/>
        <end position="155"/>
    </location>
</feature>
<feature type="glycosylation site" description="O-linked (GalNAc...) threonine" evidence="1">
    <location>
        <position position="24"/>
    </location>
</feature>
<feature type="glycosylation site" description="N-linked (GlcNAc...) asparagine" evidence="3">
    <location>
        <position position="112"/>
    </location>
</feature>
<feature type="disulfide bond" evidence="1">
    <location>
        <begin position="79"/>
        <end position="127"/>
    </location>
</feature>
<feature type="sequence conflict" description="In Ref. 3; AAA75360." evidence="4" ref="3">
    <original>M</original>
    <variation>I</variation>
    <location>
        <position position="4"/>
    </location>
</feature>
<feature type="sequence conflict" description="In Ref. 3; AAA75360." evidence="4" ref="3">
    <original>Q</original>
    <variation>R</variation>
    <location>
        <position position="37"/>
    </location>
</feature>
<feature type="sequence conflict" description="In Ref. 3; AAA75360." evidence="4" ref="3">
    <original>F</original>
    <variation>Y</variation>
    <location>
        <position position="151"/>
    </location>
</feature>
<feature type="sequence conflict" description="In Ref. 3; AAA75360." evidence="4" ref="3">
    <original>L</original>
    <variation>M</variation>
    <location>
        <position position="154"/>
    </location>
</feature>
<protein>
    <recommendedName>
        <fullName>Interleukin-2</fullName>
        <shortName>IL-2</shortName>
    </recommendedName>
    <alternativeName>
        <fullName>T-cell growth factor</fullName>
        <shortName>TCGF</shortName>
    </alternativeName>
</protein>
<proteinExistence type="evidence at transcript level"/>
<evidence type="ECO:0000250" key="1"/>
<evidence type="ECO:0000250" key="2">
    <source>
        <dbReference type="UniProtKB" id="P60568"/>
    </source>
</evidence>
<evidence type="ECO:0000255" key="3"/>
<evidence type="ECO:0000305" key="4"/>
<dbReference type="EMBL" id="D30710">
    <property type="protein sequence ID" value="BAA06378.1"/>
    <property type="molecule type" value="mRNA"/>
</dbReference>
<dbReference type="EMBL" id="U11689">
    <property type="protein sequence ID" value="AAA75360.1"/>
    <property type="molecule type" value="mRNA"/>
</dbReference>
<dbReference type="EMBL" id="U28141">
    <property type="protein sequence ID" value="AAA68969.1"/>
    <property type="molecule type" value="mRNA"/>
</dbReference>
<dbReference type="RefSeq" id="NP_001003305.1">
    <property type="nucleotide sequence ID" value="NM_001003305.2"/>
</dbReference>
<dbReference type="SMR" id="Q29416"/>
<dbReference type="FunCoup" id="Q29416">
    <property type="interactions" value="76"/>
</dbReference>
<dbReference type="STRING" id="9615.ENSCAFP00000005941"/>
<dbReference type="GlyCosmos" id="Q29416">
    <property type="glycosylation" value="2 sites, No reported glycans"/>
</dbReference>
<dbReference type="PaxDb" id="9612-ENSCAFP00000005941"/>
<dbReference type="Ensembl" id="ENSCAFT00000006417.2">
    <property type="protein sequence ID" value="ENSCAFP00000005941.1"/>
    <property type="gene ID" value="ENSCAFG00000004008.2"/>
</dbReference>
<dbReference type="Ensembl" id="ENSCAFT00030011173.1">
    <property type="protein sequence ID" value="ENSCAFP00030009770.1"/>
    <property type="gene ID" value="ENSCAFG00030006071.1"/>
</dbReference>
<dbReference type="Ensembl" id="ENSCAFT00040023888.1">
    <property type="protein sequence ID" value="ENSCAFP00040020749.1"/>
    <property type="gene ID" value="ENSCAFG00040012911.1"/>
</dbReference>
<dbReference type="Ensembl" id="ENSCAFT00845035554.1">
    <property type="protein sequence ID" value="ENSCAFP00845027813.1"/>
    <property type="gene ID" value="ENSCAFG00845020168.1"/>
</dbReference>
<dbReference type="GeneID" id="403989"/>
<dbReference type="KEGG" id="cfa:403989"/>
<dbReference type="CTD" id="3558"/>
<dbReference type="VEuPathDB" id="HostDB:ENSCAFG00845020168"/>
<dbReference type="VGNC" id="VGNC:41963">
    <property type="gene designation" value="IL2"/>
</dbReference>
<dbReference type="eggNOG" id="ENOG502RVR5">
    <property type="taxonomic scope" value="Eukaryota"/>
</dbReference>
<dbReference type="GeneTree" id="ENSGT00390000003555"/>
<dbReference type="HOGENOM" id="CLU_124210_0_0_1"/>
<dbReference type="InParanoid" id="Q29416"/>
<dbReference type="OMA" id="NGVNNYE"/>
<dbReference type="OrthoDB" id="9450228at2759"/>
<dbReference type="TreeFam" id="TF338200"/>
<dbReference type="Reactome" id="R-CFA-5673001">
    <property type="pathway name" value="RAF/MAP kinase cascade"/>
</dbReference>
<dbReference type="Reactome" id="R-CFA-9020558">
    <property type="pathway name" value="Interleukin-2 signaling"/>
</dbReference>
<dbReference type="Reactome" id="R-CFA-912526">
    <property type="pathway name" value="Interleukin receptor SHC signaling"/>
</dbReference>
<dbReference type="Proteomes" id="UP000002254">
    <property type="component" value="Chromosome 19"/>
</dbReference>
<dbReference type="Proteomes" id="UP000694429">
    <property type="component" value="Chromosome 19"/>
</dbReference>
<dbReference type="Proteomes" id="UP000694542">
    <property type="component" value="Chromosome 19"/>
</dbReference>
<dbReference type="Proteomes" id="UP000805418">
    <property type="component" value="Chromosome 19"/>
</dbReference>
<dbReference type="Bgee" id="ENSCAFG00000004008">
    <property type="expression patterns" value="Expressed in renal medulla and 13 other cell types or tissues"/>
</dbReference>
<dbReference type="GO" id="GO:0005615">
    <property type="term" value="C:extracellular space"/>
    <property type="evidence" value="ECO:0000318"/>
    <property type="project" value="GO_Central"/>
</dbReference>
<dbReference type="GO" id="GO:0005125">
    <property type="term" value="F:cytokine activity"/>
    <property type="evidence" value="ECO:0000318"/>
    <property type="project" value="GO_Central"/>
</dbReference>
<dbReference type="GO" id="GO:0008083">
    <property type="term" value="F:growth factor activity"/>
    <property type="evidence" value="ECO:0007669"/>
    <property type="project" value="UniProtKB-KW"/>
</dbReference>
<dbReference type="GO" id="GO:0005134">
    <property type="term" value="F:interleukin-2 receptor binding"/>
    <property type="evidence" value="ECO:0000318"/>
    <property type="project" value="GO_Central"/>
</dbReference>
<dbReference type="GO" id="GO:0050798">
    <property type="term" value="P:activated T cell proliferation"/>
    <property type="evidence" value="ECO:0007669"/>
    <property type="project" value="Ensembl"/>
</dbReference>
<dbReference type="GO" id="GO:0002250">
    <property type="term" value="P:adaptive immune response"/>
    <property type="evidence" value="ECO:0007669"/>
    <property type="project" value="UniProtKB-KW"/>
</dbReference>
<dbReference type="GO" id="GO:0097696">
    <property type="term" value="P:cell surface receptor signaling pathway via STAT"/>
    <property type="evidence" value="ECO:0007669"/>
    <property type="project" value="Ensembl"/>
</dbReference>
<dbReference type="GO" id="GO:0097192">
    <property type="term" value="P:extrinsic apoptotic signaling pathway in absence of ligand"/>
    <property type="evidence" value="ECO:0007669"/>
    <property type="project" value="Ensembl"/>
</dbReference>
<dbReference type="GO" id="GO:0038110">
    <property type="term" value="P:interleukin-2-mediated signaling pathway"/>
    <property type="evidence" value="ECO:0000318"/>
    <property type="project" value="GO_Central"/>
</dbReference>
<dbReference type="GO" id="GO:0002366">
    <property type="term" value="P:leukocyte activation involved in immune response"/>
    <property type="evidence" value="ECO:0007669"/>
    <property type="project" value="Ensembl"/>
</dbReference>
<dbReference type="GO" id="GO:0002903">
    <property type="term" value="P:negative regulation of B cell apoptotic process"/>
    <property type="evidence" value="ECO:0007669"/>
    <property type="project" value="Ensembl"/>
</dbReference>
<dbReference type="GO" id="GO:0050728">
    <property type="term" value="P:negative regulation of inflammatory response"/>
    <property type="evidence" value="ECO:0007669"/>
    <property type="project" value="Ensembl"/>
</dbReference>
<dbReference type="GO" id="GO:0050672">
    <property type="term" value="P:negative regulation of lymphocyte proliferation"/>
    <property type="evidence" value="ECO:0007669"/>
    <property type="project" value="Ensembl"/>
</dbReference>
<dbReference type="GO" id="GO:2000320">
    <property type="term" value="P:negative regulation of T-helper 17 cell differentiation"/>
    <property type="evidence" value="ECO:0007669"/>
    <property type="project" value="Ensembl"/>
</dbReference>
<dbReference type="GO" id="GO:0042104">
    <property type="term" value="P:positive regulation of activated T cell proliferation"/>
    <property type="evidence" value="ECO:0007669"/>
    <property type="project" value="Ensembl"/>
</dbReference>
<dbReference type="GO" id="GO:0030890">
    <property type="term" value="P:positive regulation of B cell proliferation"/>
    <property type="evidence" value="ECO:0007669"/>
    <property type="project" value="Ensembl"/>
</dbReference>
<dbReference type="GO" id="GO:0032740">
    <property type="term" value="P:positive regulation of interleukin-17 production"/>
    <property type="evidence" value="ECO:0007669"/>
    <property type="project" value="Ensembl"/>
</dbReference>
<dbReference type="GO" id="GO:0048304">
    <property type="term" value="P:positive regulation of isotype switching to IgG isotypes"/>
    <property type="evidence" value="ECO:0007669"/>
    <property type="project" value="Ensembl"/>
</dbReference>
<dbReference type="GO" id="GO:1900100">
    <property type="term" value="P:positive regulation of plasma cell differentiation"/>
    <property type="evidence" value="ECO:0007669"/>
    <property type="project" value="Ensembl"/>
</dbReference>
<dbReference type="GO" id="GO:0045944">
    <property type="term" value="P:positive regulation of transcription by RNA polymerase II"/>
    <property type="evidence" value="ECO:0007669"/>
    <property type="project" value="Ensembl"/>
</dbReference>
<dbReference type="GO" id="GO:0032729">
    <property type="term" value="P:positive regulation of type II interferon production"/>
    <property type="evidence" value="ECO:0007669"/>
    <property type="project" value="Ensembl"/>
</dbReference>
<dbReference type="GO" id="GO:2000561">
    <property type="term" value="P:regulation of CD4-positive, alpha-beta T cell proliferation"/>
    <property type="evidence" value="ECO:0007669"/>
    <property type="project" value="Ensembl"/>
</dbReference>
<dbReference type="GO" id="GO:0046013">
    <property type="term" value="P:regulation of T cell homeostatic proliferation"/>
    <property type="evidence" value="ECO:0007669"/>
    <property type="project" value="Ensembl"/>
</dbReference>
<dbReference type="GO" id="GO:0006366">
    <property type="term" value="P:transcription by RNA polymerase II"/>
    <property type="evidence" value="ECO:0007669"/>
    <property type="project" value="Ensembl"/>
</dbReference>
<dbReference type="Gene3D" id="1.20.1250.10">
    <property type="match status" value="1"/>
</dbReference>
<dbReference type="InterPro" id="IPR009079">
    <property type="entry name" value="4_helix_cytokine-like_core"/>
</dbReference>
<dbReference type="InterPro" id="IPR000779">
    <property type="entry name" value="IL-2"/>
</dbReference>
<dbReference type="InterPro" id="IPR030477">
    <property type="entry name" value="IL-2_CS"/>
</dbReference>
<dbReference type="PANTHER" id="PTHR48487">
    <property type="entry name" value="INTERLEUKIN-2"/>
    <property type="match status" value="1"/>
</dbReference>
<dbReference type="PANTHER" id="PTHR48487:SF1">
    <property type="entry name" value="INTERLEUKIN-2"/>
    <property type="match status" value="1"/>
</dbReference>
<dbReference type="Pfam" id="PF00715">
    <property type="entry name" value="IL2"/>
    <property type="match status" value="1"/>
</dbReference>
<dbReference type="PRINTS" id="PR00265">
    <property type="entry name" value="INTERLEUKIN2"/>
</dbReference>
<dbReference type="SMART" id="SM00189">
    <property type="entry name" value="IL2"/>
    <property type="match status" value="1"/>
</dbReference>
<dbReference type="SUPFAM" id="SSF47266">
    <property type="entry name" value="4-helical cytokines"/>
    <property type="match status" value="1"/>
</dbReference>
<dbReference type="PROSITE" id="PS00424">
    <property type="entry name" value="INTERLEUKIN_2"/>
    <property type="match status" value="1"/>
</dbReference>
<sequence length="155" mass="17668">MYKMQLLSCIALTLVLVANSAPITSSSTKETEQQMEQLLLDLQLLLNGVNNYENPQLSRMLTFKFYTPKKATEFTHLQCLAEELKNLEEVLGLPQSKNVHLTDTKELISNMNVTLLKLKGSETSYNCEYDDETATITEFLNKWITFCQSIFSTLT</sequence>
<organism>
    <name type="scientific">Canis lupus familiaris</name>
    <name type="common">Dog</name>
    <name type="synonym">Canis familiaris</name>
    <dbReference type="NCBI Taxonomy" id="9615"/>
    <lineage>
        <taxon>Eukaryota</taxon>
        <taxon>Metazoa</taxon>
        <taxon>Chordata</taxon>
        <taxon>Craniata</taxon>
        <taxon>Vertebrata</taxon>
        <taxon>Euteleostomi</taxon>
        <taxon>Mammalia</taxon>
        <taxon>Eutheria</taxon>
        <taxon>Laurasiatheria</taxon>
        <taxon>Carnivora</taxon>
        <taxon>Caniformia</taxon>
        <taxon>Canidae</taxon>
        <taxon>Canis</taxon>
    </lineage>
</organism>